<feature type="chain" id="PRO_0000159339" description="Cysteine--tRNA ligase">
    <location>
        <begin position="1"/>
        <end position="486"/>
    </location>
</feature>
<feature type="short sequence motif" description="'HIGH' region">
    <location>
        <begin position="31"/>
        <end position="41"/>
    </location>
</feature>
<feature type="short sequence motif" description="'KMSKS' region">
    <location>
        <begin position="271"/>
        <end position="275"/>
    </location>
</feature>
<feature type="binding site" evidence="1">
    <location>
        <position position="29"/>
    </location>
    <ligand>
        <name>Zn(2+)</name>
        <dbReference type="ChEBI" id="CHEBI:29105"/>
    </ligand>
</feature>
<feature type="binding site" evidence="1">
    <location>
        <position position="214"/>
    </location>
    <ligand>
        <name>Zn(2+)</name>
        <dbReference type="ChEBI" id="CHEBI:29105"/>
    </ligand>
</feature>
<feature type="binding site" evidence="1">
    <location>
        <position position="239"/>
    </location>
    <ligand>
        <name>Zn(2+)</name>
        <dbReference type="ChEBI" id="CHEBI:29105"/>
    </ligand>
</feature>
<feature type="binding site" evidence="1">
    <location>
        <position position="243"/>
    </location>
    <ligand>
        <name>Zn(2+)</name>
        <dbReference type="ChEBI" id="CHEBI:29105"/>
    </ligand>
</feature>
<feature type="binding site" evidence="1">
    <location>
        <position position="274"/>
    </location>
    <ligand>
        <name>ATP</name>
        <dbReference type="ChEBI" id="CHEBI:30616"/>
    </ligand>
</feature>
<dbReference type="EC" id="6.1.1.16" evidence="1"/>
<dbReference type="EMBL" id="BA000019">
    <property type="protein sequence ID" value="BAB73049.1"/>
    <property type="molecule type" value="Genomic_DNA"/>
</dbReference>
<dbReference type="PIR" id="AI1942">
    <property type="entry name" value="AI1942"/>
</dbReference>
<dbReference type="RefSeq" id="WP_010995266.1">
    <property type="nucleotide sequence ID" value="NZ_RSCN01000008.1"/>
</dbReference>
<dbReference type="SMR" id="Q8YXW5"/>
<dbReference type="STRING" id="103690.gene:10493106"/>
<dbReference type="KEGG" id="ana:all1092"/>
<dbReference type="eggNOG" id="COG0215">
    <property type="taxonomic scope" value="Bacteria"/>
</dbReference>
<dbReference type="OrthoDB" id="9815130at2"/>
<dbReference type="Proteomes" id="UP000002483">
    <property type="component" value="Chromosome"/>
</dbReference>
<dbReference type="GO" id="GO:0005829">
    <property type="term" value="C:cytosol"/>
    <property type="evidence" value="ECO:0007669"/>
    <property type="project" value="TreeGrafter"/>
</dbReference>
<dbReference type="GO" id="GO:0005524">
    <property type="term" value="F:ATP binding"/>
    <property type="evidence" value="ECO:0007669"/>
    <property type="project" value="UniProtKB-UniRule"/>
</dbReference>
<dbReference type="GO" id="GO:0004817">
    <property type="term" value="F:cysteine-tRNA ligase activity"/>
    <property type="evidence" value="ECO:0007669"/>
    <property type="project" value="UniProtKB-UniRule"/>
</dbReference>
<dbReference type="GO" id="GO:0008270">
    <property type="term" value="F:zinc ion binding"/>
    <property type="evidence" value="ECO:0007669"/>
    <property type="project" value="UniProtKB-UniRule"/>
</dbReference>
<dbReference type="GO" id="GO:0006423">
    <property type="term" value="P:cysteinyl-tRNA aminoacylation"/>
    <property type="evidence" value="ECO:0007669"/>
    <property type="project" value="UniProtKB-UniRule"/>
</dbReference>
<dbReference type="CDD" id="cd00672">
    <property type="entry name" value="CysRS_core"/>
    <property type="match status" value="1"/>
</dbReference>
<dbReference type="FunFam" id="3.40.50.620:FF:000009">
    <property type="entry name" value="Cysteine--tRNA ligase"/>
    <property type="match status" value="1"/>
</dbReference>
<dbReference type="Gene3D" id="1.20.120.1910">
    <property type="entry name" value="Cysteine-tRNA ligase, C-terminal anti-codon recognition domain"/>
    <property type="match status" value="1"/>
</dbReference>
<dbReference type="Gene3D" id="3.40.50.620">
    <property type="entry name" value="HUPs"/>
    <property type="match status" value="1"/>
</dbReference>
<dbReference type="HAMAP" id="MF_00041">
    <property type="entry name" value="Cys_tRNA_synth"/>
    <property type="match status" value="1"/>
</dbReference>
<dbReference type="InterPro" id="IPR015803">
    <property type="entry name" value="Cys-tRNA-ligase"/>
</dbReference>
<dbReference type="InterPro" id="IPR015273">
    <property type="entry name" value="Cys-tRNA-synt_Ia_DALR"/>
</dbReference>
<dbReference type="InterPro" id="IPR024909">
    <property type="entry name" value="Cys-tRNA/MSH_ligase"/>
</dbReference>
<dbReference type="InterPro" id="IPR056411">
    <property type="entry name" value="CysS_C"/>
</dbReference>
<dbReference type="InterPro" id="IPR014729">
    <property type="entry name" value="Rossmann-like_a/b/a_fold"/>
</dbReference>
<dbReference type="InterPro" id="IPR032678">
    <property type="entry name" value="tRNA-synt_1_cat_dom"/>
</dbReference>
<dbReference type="InterPro" id="IPR009080">
    <property type="entry name" value="tRNAsynth_Ia_anticodon-bd"/>
</dbReference>
<dbReference type="NCBIfam" id="TIGR00435">
    <property type="entry name" value="cysS"/>
    <property type="match status" value="1"/>
</dbReference>
<dbReference type="PANTHER" id="PTHR10890:SF3">
    <property type="entry name" value="CYSTEINE--TRNA LIGASE, CYTOPLASMIC"/>
    <property type="match status" value="1"/>
</dbReference>
<dbReference type="PANTHER" id="PTHR10890">
    <property type="entry name" value="CYSTEINYL-TRNA SYNTHETASE"/>
    <property type="match status" value="1"/>
</dbReference>
<dbReference type="Pfam" id="PF23493">
    <property type="entry name" value="CysS_C"/>
    <property type="match status" value="1"/>
</dbReference>
<dbReference type="Pfam" id="PF09190">
    <property type="entry name" value="DALR_2"/>
    <property type="match status" value="1"/>
</dbReference>
<dbReference type="Pfam" id="PF01406">
    <property type="entry name" value="tRNA-synt_1e"/>
    <property type="match status" value="1"/>
</dbReference>
<dbReference type="PRINTS" id="PR00983">
    <property type="entry name" value="TRNASYNTHCYS"/>
</dbReference>
<dbReference type="SMART" id="SM00840">
    <property type="entry name" value="DALR_2"/>
    <property type="match status" value="1"/>
</dbReference>
<dbReference type="SUPFAM" id="SSF47323">
    <property type="entry name" value="Anticodon-binding domain of a subclass of class I aminoacyl-tRNA synthetases"/>
    <property type="match status" value="1"/>
</dbReference>
<dbReference type="SUPFAM" id="SSF52374">
    <property type="entry name" value="Nucleotidylyl transferase"/>
    <property type="match status" value="1"/>
</dbReference>
<proteinExistence type="inferred from homology"/>
<gene>
    <name evidence="1" type="primary">cysS</name>
    <name type="ordered locus">all1092</name>
</gene>
<evidence type="ECO:0000255" key="1">
    <source>
        <dbReference type="HAMAP-Rule" id="MF_00041"/>
    </source>
</evidence>
<organism>
    <name type="scientific">Nostoc sp. (strain PCC 7120 / SAG 25.82 / UTEX 2576)</name>
    <dbReference type="NCBI Taxonomy" id="103690"/>
    <lineage>
        <taxon>Bacteria</taxon>
        <taxon>Bacillati</taxon>
        <taxon>Cyanobacteriota</taxon>
        <taxon>Cyanophyceae</taxon>
        <taxon>Nostocales</taxon>
        <taxon>Nostocaceae</taxon>
        <taxon>Nostoc</taxon>
    </lineage>
</organism>
<protein>
    <recommendedName>
        <fullName evidence="1">Cysteine--tRNA ligase</fullName>
        <ecNumber evidence="1">6.1.1.16</ecNumber>
    </recommendedName>
    <alternativeName>
        <fullName evidence="1">Cysteinyl-tRNA synthetase</fullName>
        <shortName evidence="1">CysRS</shortName>
    </alternativeName>
</protein>
<reference key="1">
    <citation type="journal article" date="2001" name="DNA Res.">
        <title>Complete genomic sequence of the filamentous nitrogen-fixing cyanobacterium Anabaena sp. strain PCC 7120.</title>
        <authorList>
            <person name="Kaneko T."/>
            <person name="Nakamura Y."/>
            <person name="Wolk C.P."/>
            <person name="Kuritz T."/>
            <person name="Sasamoto S."/>
            <person name="Watanabe A."/>
            <person name="Iriguchi M."/>
            <person name="Ishikawa A."/>
            <person name="Kawashima K."/>
            <person name="Kimura T."/>
            <person name="Kishida Y."/>
            <person name="Kohara M."/>
            <person name="Matsumoto M."/>
            <person name="Matsuno A."/>
            <person name="Muraki A."/>
            <person name="Nakazaki N."/>
            <person name="Shimpo S."/>
            <person name="Sugimoto M."/>
            <person name="Takazawa M."/>
            <person name="Yamada M."/>
            <person name="Yasuda M."/>
            <person name="Tabata S."/>
        </authorList>
    </citation>
    <scope>NUCLEOTIDE SEQUENCE [LARGE SCALE GENOMIC DNA]</scope>
    <source>
        <strain>PCC 7120 / SAG 25.82 / UTEX 2576</strain>
    </source>
</reference>
<sequence length="486" mass="55140">MTLTIYNTLTRRQEPLETVEPGKVKMYCCGVTVYDYCHLGHARSYIVWDTIRRYLIWRGFGVKYIQNFTDIDDKILNRAKEQGLTMAEVSNRFIDAYFADIRRLNVLDADEYPRVTEHIPEIHQLIQILEEKGLAYAVGGDVYYRVERFPSYGKLSGRELEQMQAGASGRVDAEDSEPKKQHPFDFALWKAAKPGEPAWDSPWGAGRPGWHIECSAMIRSKLGATIDIHGGGGDLIFPHHENEIAQSEAAMNQPLARYWTHNGMVMVNGQKMSKSLGNFITIRELLDGVGSWKEDPVNPMAVRLFVLQAHYRKPLDFTEEAIATAENSWKTLKEGLLFGYQYGEKLGWGQESAIIPELATRFQELGDDDFNFSGGLAVLFELAKELRREGNILVHEGTTKTPSDELQRQWNTLVTLAKILGLEAKLDDETQTQAGLSDTDIEALIEQRQAARKNKNFSESDRIRNELQAQGVTLIDSPQGTRWHRS</sequence>
<accession>Q8YXW5</accession>
<keyword id="KW-0030">Aminoacyl-tRNA synthetase</keyword>
<keyword id="KW-0067">ATP-binding</keyword>
<keyword id="KW-0963">Cytoplasm</keyword>
<keyword id="KW-0436">Ligase</keyword>
<keyword id="KW-0479">Metal-binding</keyword>
<keyword id="KW-0547">Nucleotide-binding</keyword>
<keyword id="KW-0648">Protein biosynthesis</keyword>
<keyword id="KW-1185">Reference proteome</keyword>
<keyword id="KW-0862">Zinc</keyword>
<comment type="catalytic activity">
    <reaction evidence="1">
        <text>tRNA(Cys) + L-cysteine + ATP = L-cysteinyl-tRNA(Cys) + AMP + diphosphate</text>
        <dbReference type="Rhea" id="RHEA:17773"/>
        <dbReference type="Rhea" id="RHEA-COMP:9661"/>
        <dbReference type="Rhea" id="RHEA-COMP:9679"/>
        <dbReference type="ChEBI" id="CHEBI:30616"/>
        <dbReference type="ChEBI" id="CHEBI:33019"/>
        <dbReference type="ChEBI" id="CHEBI:35235"/>
        <dbReference type="ChEBI" id="CHEBI:78442"/>
        <dbReference type="ChEBI" id="CHEBI:78517"/>
        <dbReference type="ChEBI" id="CHEBI:456215"/>
        <dbReference type="EC" id="6.1.1.16"/>
    </reaction>
</comment>
<comment type="cofactor">
    <cofactor evidence="1">
        <name>Zn(2+)</name>
        <dbReference type="ChEBI" id="CHEBI:29105"/>
    </cofactor>
    <text evidence="1">Binds 1 zinc ion per subunit.</text>
</comment>
<comment type="subunit">
    <text evidence="1">Monomer.</text>
</comment>
<comment type="subcellular location">
    <subcellularLocation>
        <location evidence="1">Cytoplasm</location>
    </subcellularLocation>
</comment>
<comment type="similarity">
    <text evidence="1">Belongs to the class-I aminoacyl-tRNA synthetase family.</text>
</comment>
<name>SYC_NOSS1</name>